<keyword id="KW-0002">3D-structure</keyword>
<keyword id="KW-0049">Antioxidant</keyword>
<keyword id="KW-1003">Cell membrane</keyword>
<keyword id="KW-0186">Copper</keyword>
<keyword id="KW-1015">Disulfide bond</keyword>
<keyword id="KW-0449">Lipoprotein</keyword>
<keyword id="KW-0472">Membrane</keyword>
<keyword id="KW-0479">Metal-binding</keyword>
<keyword id="KW-0560">Oxidoreductase</keyword>
<keyword id="KW-0564">Palmitate</keyword>
<keyword id="KW-1185">Reference proteome</keyword>
<keyword id="KW-0732">Signal</keyword>
<keyword id="KW-0862">Zinc</keyword>
<gene>
    <name type="primary">sodC</name>
    <name type="ordered locus">Rv0432</name>
    <name type="ORF">MTCY22G10.29</name>
</gene>
<proteinExistence type="evidence at protein level"/>
<feature type="signal peptide" evidence="5">
    <location>
        <begin position="1"/>
        <end position="32"/>
    </location>
</feature>
<feature type="chain" id="PRO_0000032840" description="Superoxide dismutase [Cu-Zn]">
    <location>
        <begin position="33"/>
        <end position="240"/>
    </location>
</feature>
<feature type="region of interest" description="Disordered" evidence="3">
    <location>
        <begin position="36"/>
        <end position="77"/>
    </location>
</feature>
<feature type="compositionally biased region" description="Polar residues" evidence="3">
    <location>
        <begin position="36"/>
        <end position="51"/>
    </location>
</feature>
<feature type="compositionally biased region" description="Polar residues" evidence="3">
    <location>
        <begin position="68"/>
        <end position="77"/>
    </location>
</feature>
<feature type="binding site">
    <location>
        <position position="116"/>
    </location>
    <ligand>
        <name>Cu cation</name>
        <dbReference type="ChEBI" id="CHEBI:23378"/>
        <note>catalytic</note>
    </ligand>
</feature>
<feature type="binding site">
    <location>
        <position position="118"/>
    </location>
    <ligand>
        <name>Cu cation</name>
        <dbReference type="ChEBI" id="CHEBI:23378"/>
        <note>catalytic</note>
    </ligand>
</feature>
<feature type="binding site">
    <location>
        <position position="144"/>
    </location>
    <ligand>
        <name>Cu cation</name>
        <dbReference type="ChEBI" id="CHEBI:23378"/>
        <note>catalytic</note>
    </ligand>
</feature>
<feature type="binding site">
    <location>
        <position position="195"/>
    </location>
    <ligand>
        <name>Cu cation</name>
        <dbReference type="ChEBI" id="CHEBI:23378"/>
        <note>catalytic</note>
    </ligand>
</feature>
<feature type="lipid moiety-binding region" description="N-palmitoyl cysteine" evidence="5">
    <location>
        <position position="33"/>
    </location>
</feature>
<feature type="lipid moiety-binding region" description="S-diacylglycerol cysteine" evidence="5">
    <location>
        <position position="33"/>
    </location>
</feature>
<feature type="disulfide bond">
    <location>
        <begin position="123"/>
        <end position="234"/>
    </location>
</feature>
<feature type="strand" evidence="6">
    <location>
        <begin position="71"/>
        <end position="77"/>
    </location>
</feature>
<feature type="strand" evidence="6">
    <location>
        <begin position="83"/>
        <end position="92"/>
    </location>
</feature>
<feature type="strand" evidence="6">
    <location>
        <begin position="95"/>
        <end position="108"/>
    </location>
</feature>
<feature type="strand" evidence="6">
    <location>
        <begin position="110"/>
        <end position="113"/>
    </location>
</feature>
<feature type="strand" evidence="6">
    <location>
        <begin position="115"/>
        <end position="120"/>
    </location>
</feature>
<feature type="strand" evidence="6">
    <location>
        <begin position="125"/>
        <end position="127"/>
    </location>
</feature>
<feature type="helix" evidence="6">
    <location>
        <begin position="139"/>
        <end position="141"/>
    </location>
</feature>
<feature type="strand" evidence="6">
    <location>
        <begin position="152"/>
        <end position="154"/>
    </location>
</feature>
<feature type="strand" evidence="6">
    <location>
        <begin position="162"/>
        <end position="164"/>
    </location>
</feature>
<feature type="strand" evidence="6">
    <location>
        <begin position="171"/>
        <end position="178"/>
    </location>
</feature>
<feature type="helix" evidence="6">
    <location>
        <begin position="181"/>
        <end position="185"/>
    </location>
</feature>
<feature type="strand" evidence="6">
    <location>
        <begin position="191"/>
        <end position="197"/>
    </location>
</feature>
<feature type="turn" evidence="6">
    <location>
        <begin position="206"/>
        <end position="208"/>
    </location>
</feature>
<feature type="helix" evidence="6">
    <location>
        <begin position="220"/>
        <end position="225"/>
    </location>
</feature>
<feature type="strand" evidence="6">
    <location>
        <begin position="230"/>
        <end position="239"/>
    </location>
</feature>
<protein>
    <recommendedName>
        <fullName>Superoxide dismutase [Cu-Zn]</fullName>
        <ecNumber>1.15.1.1</ecNumber>
    </recommendedName>
</protein>
<accession>P9WGE9</accession>
<accession>L0T6G1</accession>
<accession>P0A608</accession>
<accession>P96278</accession>
<dbReference type="EC" id="1.15.1.1"/>
<dbReference type="EMBL" id="AL123456">
    <property type="protein sequence ID" value="CCP43163.1"/>
    <property type="molecule type" value="Genomic_DNA"/>
</dbReference>
<dbReference type="PIR" id="F70631">
    <property type="entry name" value="F70631"/>
</dbReference>
<dbReference type="RefSeq" id="NP_214946.1">
    <property type="nucleotide sequence ID" value="NC_000962.3"/>
</dbReference>
<dbReference type="RefSeq" id="WP_003402198.1">
    <property type="nucleotide sequence ID" value="NZ_NVQJ01000002.1"/>
</dbReference>
<dbReference type="PDB" id="1PZS">
    <property type="method" value="X-ray"/>
    <property type="resolution" value="1.63 A"/>
    <property type="chains" value="A=33-240"/>
</dbReference>
<dbReference type="PDBsum" id="1PZS"/>
<dbReference type="SMR" id="P9WGE9"/>
<dbReference type="FunCoup" id="P9WGE9">
    <property type="interactions" value="252"/>
</dbReference>
<dbReference type="STRING" id="83332.Rv0432"/>
<dbReference type="PaxDb" id="83332-Rv0432"/>
<dbReference type="DNASU" id="886358"/>
<dbReference type="GeneID" id="886358"/>
<dbReference type="KEGG" id="mtu:Rv0432"/>
<dbReference type="KEGG" id="mtv:RVBD_0432"/>
<dbReference type="TubercuList" id="Rv0432"/>
<dbReference type="eggNOG" id="COG2032">
    <property type="taxonomic scope" value="Bacteria"/>
</dbReference>
<dbReference type="InParanoid" id="P9WGE9"/>
<dbReference type="OrthoDB" id="9792957at2"/>
<dbReference type="PhylomeDB" id="P9WGE9"/>
<dbReference type="Reactome" id="R-HSA-1222387">
    <property type="pathway name" value="Tolerance of reactive oxygen produced by macrophages"/>
</dbReference>
<dbReference type="EvolutionaryTrace" id="P9WGE9"/>
<dbReference type="Proteomes" id="UP000001584">
    <property type="component" value="Chromosome"/>
</dbReference>
<dbReference type="GO" id="GO:0005576">
    <property type="term" value="C:extracellular region"/>
    <property type="evidence" value="ECO:0007005"/>
    <property type="project" value="MTBBASE"/>
</dbReference>
<dbReference type="GO" id="GO:0009274">
    <property type="term" value="C:peptidoglycan-based cell wall"/>
    <property type="evidence" value="ECO:0007005"/>
    <property type="project" value="MTBBASE"/>
</dbReference>
<dbReference type="GO" id="GO:0005886">
    <property type="term" value="C:plasma membrane"/>
    <property type="evidence" value="ECO:0000314"/>
    <property type="project" value="MTBBASE"/>
</dbReference>
<dbReference type="GO" id="GO:0004784">
    <property type="term" value="F:superoxide dismutase activity"/>
    <property type="evidence" value="ECO:0000314"/>
    <property type="project" value="MTBBASE"/>
</dbReference>
<dbReference type="GO" id="GO:0045454">
    <property type="term" value="P:cell redox homeostasis"/>
    <property type="evidence" value="ECO:0000315"/>
    <property type="project" value="MTBBASE"/>
</dbReference>
<dbReference type="GO" id="GO:0019430">
    <property type="term" value="P:removal of superoxide radicals"/>
    <property type="evidence" value="ECO:0000318"/>
    <property type="project" value="GO_Central"/>
</dbReference>
<dbReference type="GO" id="GO:0075136">
    <property type="term" value="P:response to host"/>
    <property type="evidence" value="ECO:0000270"/>
    <property type="project" value="MTBBASE"/>
</dbReference>
<dbReference type="GO" id="GO:0033194">
    <property type="term" value="P:response to hydroperoxide"/>
    <property type="evidence" value="ECO:0000315"/>
    <property type="project" value="MTBBASE"/>
</dbReference>
<dbReference type="GO" id="GO:0006979">
    <property type="term" value="P:response to oxidative stress"/>
    <property type="evidence" value="ECO:0000315"/>
    <property type="project" value="MTBBASE"/>
</dbReference>
<dbReference type="GO" id="GO:0141082">
    <property type="term" value="P:symbiont-mediated detoxification of host-generated reactive oxygen species"/>
    <property type="evidence" value="ECO:0000314"/>
    <property type="project" value="MTBBASE"/>
</dbReference>
<dbReference type="CDD" id="cd00305">
    <property type="entry name" value="Cu-Zn_Superoxide_Dismutase"/>
    <property type="match status" value="1"/>
</dbReference>
<dbReference type="FunFam" id="2.60.40.200:FF:000012">
    <property type="entry name" value="Superoxide dismutase [Cu-Zn]"/>
    <property type="match status" value="1"/>
</dbReference>
<dbReference type="Gene3D" id="2.60.40.200">
    <property type="entry name" value="Superoxide dismutase, copper/zinc binding domain"/>
    <property type="match status" value="1"/>
</dbReference>
<dbReference type="InterPro" id="IPR036423">
    <property type="entry name" value="SOD-like_Cu/Zn_dom_sf"/>
</dbReference>
<dbReference type="InterPro" id="IPR024134">
    <property type="entry name" value="SOD_Cu/Zn_/chaperone"/>
</dbReference>
<dbReference type="InterPro" id="IPR018152">
    <property type="entry name" value="SOD_Cu/Zn_BS"/>
</dbReference>
<dbReference type="InterPro" id="IPR001424">
    <property type="entry name" value="SOD_Cu_Zn_dom"/>
</dbReference>
<dbReference type="NCBIfam" id="NF047631">
    <property type="entry name" value="SodCMycob"/>
    <property type="match status" value="1"/>
</dbReference>
<dbReference type="PANTHER" id="PTHR10003">
    <property type="entry name" value="SUPEROXIDE DISMUTASE CU-ZN -RELATED"/>
    <property type="match status" value="1"/>
</dbReference>
<dbReference type="Pfam" id="PF00080">
    <property type="entry name" value="Sod_Cu"/>
    <property type="match status" value="1"/>
</dbReference>
<dbReference type="SUPFAM" id="SSF49329">
    <property type="entry name" value="Cu,Zn superoxide dismutase-like"/>
    <property type="match status" value="1"/>
</dbReference>
<dbReference type="PROSITE" id="PS51257">
    <property type="entry name" value="PROKAR_LIPOPROTEIN"/>
    <property type="match status" value="1"/>
</dbReference>
<dbReference type="PROSITE" id="PS00332">
    <property type="entry name" value="SOD_CU_ZN_2"/>
    <property type="match status" value="1"/>
</dbReference>
<name>SODC_MYCTU</name>
<comment type="function">
    <text evidence="1">Destroys radicals which are normally produced within the cells and which are toxic to biological systems. May play a role in favoring mycobacterial survival in phagocytes (By similarity).</text>
</comment>
<comment type="catalytic activity">
    <reaction>
        <text>2 superoxide + 2 H(+) = H2O2 + O2</text>
        <dbReference type="Rhea" id="RHEA:20696"/>
        <dbReference type="ChEBI" id="CHEBI:15378"/>
        <dbReference type="ChEBI" id="CHEBI:15379"/>
        <dbReference type="ChEBI" id="CHEBI:16240"/>
        <dbReference type="ChEBI" id="CHEBI:18421"/>
        <dbReference type="EC" id="1.15.1.1"/>
    </reaction>
</comment>
<comment type="cofactor">
    <cofactor>
        <name>Cu cation</name>
        <dbReference type="ChEBI" id="CHEBI:23378"/>
    </cofactor>
    <text>Binds 1 copper ion per subunit.</text>
</comment>
<comment type="activity regulation">
    <text>Inhibited by the copper chelator diethyl dithiocarbamate.</text>
</comment>
<comment type="subunit">
    <text evidence="4">Homodimer.</text>
</comment>
<comment type="subcellular location">
    <subcellularLocation>
        <location evidence="2">Cell membrane</location>
        <topology evidence="2">Lipid-anchor</topology>
    </subcellularLocation>
</comment>
<comment type="miscellaneous">
    <text>Does not bind zinc ions. Has normal enzyme activity in the absence of zinc ions.</text>
</comment>
<comment type="similarity">
    <text evidence="5">Belongs to the Cu-Zn superoxide dismutase family.</text>
</comment>
<comment type="caution">
    <text evidence="5">Lacks two conserved histidine residues that bind copper and zinc.</text>
</comment>
<evidence type="ECO:0000250" key="1"/>
<evidence type="ECO:0000255" key="2">
    <source>
        <dbReference type="PROSITE-ProRule" id="PRU00303"/>
    </source>
</evidence>
<evidence type="ECO:0000256" key="3">
    <source>
        <dbReference type="SAM" id="MobiDB-lite"/>
    </source>
</evidence>
<evidence type="ECO:0000269" key="4">
    <source>
    </source>
</evidence>
<evidence type="ECO:0000305" key="5"/>
<evidence type="ECO:0007829" key="6">
    <source>
        <dbReference type="PDB" id="1PZS"/>
    </source>
</evidence>
<sequence>MPKPADHRNHAAVSTSVLSALFLGAGAALLSACSSPQHASTVPGTTPSIWTGSPAPSGLSGHDEESPGAQSLTSTLTAPDGTKVATAKFEFANGYATVTIATTGVGKLTPGFHGLHIHQVGKCEPNSVAPTGGAPGNFLSAGGHYHVPGHTGTPASGDLASLQVRGDGSAMLVTTTDAFTMDDLLSGAKTAIIIHAGADNFANIPPERYVQVNGTPGPDETTLTTGDAGKRVACGVIGSG</sequence>
<organism>
    <name type="scientific">Mycobacterium tuberculosis (strain ATCC 25618 / H37Rv)</name>
    <dbReference type="NCBI Taxonomy" id="83332"/>
    <lineage>
        <taxon>Bacteria</taxon>
        <taxon>Bacillati</taxon>
        <taxon>Actinomycetota</taxon>
        <taxon>Actinomycetes</taxon>
        <taxon>Mycobacteriales</taxon>
        <taxon>Mycobacteriaceae</taxon>
        <taxon>Mycobacterium</taxon>
        <taxon>Mycobacterium tuberculosis complex</taxon>
    </lineage>
</organism>
<reference key="1">
    <citation type="journal article" date="1998" name="Nature">
        <title>Deciphering the biology of Mycobacterium tuberculosis from the complete genome sequence.</title>
        <authorList>
            <person name="Cole S.T."/>
            <person name="Brosch R."/>
            <person name="Parkhill J."/>
            <person name="Garnier T."/>
            <person name="Churcher C.M."/>
            <person name="Harris D.E."/>
            <person name="Gordon S.V."/>
            <person name="Eiglmeier K."/>
            <person name="Gas S."/>
            <person name="Barry C.E. III"/>
            <person name="Tekaia F."/>
            <person name="Badcock K."/>
            <person name="Basham D."/>
            <person name="Brown D."/>
            <person name="Chillingworth T."/>
            <person name="Connor R."/>
            <person name="Davies R.M."/>
            <person name="Devlin K."/>
            <person name="Feltwell T."/>
            <person name="Gentles S."/>
            <person name="Hamlin N."/>
            <person name="Holroyd S."/>
            <person name="Hornsby T."/>
            <person name="Jagels K."/>
            <person name="Krogh A."/>
            <person name="McLean J."/>
            <person name="Moule S."/>
            <person name="Murphy L.D."/>
            <person name="Oliver S."/>
            <person name="Osborne J."/>
            <person name="Quail M.A."/>
            <person name="Rajandream M.A."/>
            <person name="Rogers J."/>
            <person name="Rutter S."/>
            <person name="Seeger K."/>
            <person name="Skelton S."/>
            <person name="Squares S."/>
            <person name="Squares R."/>
            <person name="Sulston J.E."/>
            <person name="Taylor K."/>
            <person name="Whitehead S."/>
            <person name="Barrell B.G."/>
        </authorList>
    </citation>
    <scope>NUCLEOTIDE SEQUENCE [LARGE SCALE GENOMIC DNA]</scope>
    <source>
        <strain>ATCC 25618 / H37Rv</strain>
    </source>
</reference>
<reference key="2">
    <citation type="journal article" date="2001" name="Biochem. J.">
        <title>Lipid modification of the Cu,Zn superoxide dismutase from Mycobacterium tuberculosis.</title>
        <authorList>
            <person name="D'Orazio M."/>
            <person name="Folcarelli S."/>
            <person name="Mariani F."/>
            <person name="Colizzi V."/>
            <person name="Rotilio G."/>
            <person name="Battistoni A."/>
        </authorList>
    </citation>
    <scope>CHARACTERIZATION</scope>
</reference>
<reference key="3">
    <citation type="journal article" date="2011" name="Mol. Cell. Proteomics">
        <title>Proteogenomic analysis of Mycobacterium tuberculosis by high resolution mass spectrometry.</title>
        <authorList>
            <person name="Kelkar D.S."/>
            <person name="Kumar D."/>
            <person name="Kumar P."/>
            <person name="Balakrishnan L."/>
            <person name="Muthusamy B."/>
            <person name="Yadav A.K."/>
            <person name="Shrivastava P."/>
            <person name="Marimuthu A."/>
            <person name="Anand S."/>
            <person name="Sundaram H."/>
            <person name="Kingsbury R."/>
            <person name="Harsha H.C."/>
            <person name="Nair B."/>
            <person name="Prasad T.S."/>
            <person name="Chauhan D.S."/>
            <person name="Katoch K."/>
            <person name="Katoch V.M."/>
            <person name="Kumar P."/>
            <person name="Chaerkady R."/>
            <person name="Ramachandran S."/>
            <person name="Dash D."/>
            <person name="Pandey A."/>
        </authorList>
    </citation>
    <scope>IDENTIFICATION BY MASS SPECTROMETRY [LARGE SCALE ANALYSIS]</scope>
    <source>
        <strain>ATCC 25618 / H37Rv</strain>
    </source>
</reference>
<reference key="4">
    <citation type="journal article" date="2004" name="J. Biol. Chem.">
        <title>Unique features of the sodC-encoded superoxide dismutase from Mycobacterium tuberculosis, a fully functional copper-containing enzyme lacking zinc in the active site.</title>
        <authorList>
            <person name="Spagnolo L."/>
            <person name="Toro I."/>
            <person name="D'Orazio M."/>
            <person name="O'Neill P."/>
            <person name="Pedersen J.Z."/>
            <person name="Carugo O."/>
            <person name="Rotilio G."/>
            <person name="Battistoni A."/>
            <person name="Djinovic-Carugo K."/>
        </authorList>
    </citation>
    <scope>X-RAY CRYSTALLOGRAPHY (1.63 ANGSTROMS) OF 33-240 IN COMPLEX WITH COPPER IONS</scope>
    <scope>ABSENCE OF ZINC BINDING</scope>
    <scope>SUBUNIT</scope>
</reference>